<keyword id="KW-0067">ATP-binding</keyword>
<keyword id="KW-0963">Cytoplasm</keyword>
<keyword id="KW-0251">Elongation factor</keyword>
<keyword id="KW-0378">Hydrolase</keyword>
<keyword id="KW-0547">Nucleotide-binding</keyword>
<keyword id="KW-0648">Protein biosynthesis</keyword>
<keyword id="KW-1185">Reference proteome</keyword>
<keyword id="KW-0677">Repeat</keyword>
<keyword id="KW-0694">RNA-binding</keyword>
<protein>
    <recommendedName>
        <fullName evidence="1">Elongation factor 3</fullName>
        <shortName evidence="1">EF-3</shortName>
        <ecNumber evidence="1">3.6.4.-</ecNumber>
    </recommendedName>
    <alternativeName>
        <fullName evidence="1">Eukaryotic elongation factor 3</fullName>
        <shortName evidence="1">eEF3</shortName>
    </alternativeName>
</protein>
<reference key="1">
    <citation type="journal article" date="1998" name="Microbiology">
        <title>A controllable gene-expression system for the pathogenic fungus Candida glabrata.</title>
        <authorList>
            <person name="Nakayama H."/>
            <person name="Izuta M."/>
            <person name="Nagahashi S."/>
            <person name="Sihta E.Y."/>
            <person name="Sato Y."/>
            <person name="Yamazaki T."/>
            <person name="Arisawa M."/>
            <person name="Kitada K."/>
        </authorList>
    </citation>
    <scope>NUCLEOTIDE SEQUENCE [GENOMIC DNA]</scope>
    <source>
        <strain>ATCC 2001 / BCRC 20586 / JCM 3761 / NBRC 0622 / NRRL Y-65 / CBS 138</strain>
    </source>
</reference>
<reference key="2">
    <citation type="journal article" date="2004" name="Nature">
        <title>Genome evolution in yeasts.</title>
        <authorList>
            <person name="Dujon B."/>
            <person name="Sherman D."/>
            <person name="Fischer G."/>
            <person name="Durrens P."/>
            <person name="Casaregola S."/>
            <person name="Lafontaine I."/>
            <person name="de Montigny J."/>
            <person name="Marck C."/>
            <person name="Neuveglise C."/>
            <person name="Talla E."/>
            <person name="Goffard N."/>
            <person name="Frangeul L."/>
            <person name="Aigle M."/>
            <person name="Anthouard V."/>
            <person name="Babour A."/>
            <person name="Barbe V."/>
            <person name="Barnay S."/>
            <person name="Blanchin S."/>
            <person name="Beckerich J.-M."/>
            <person name="Beyne E."/>
            <person name="Bleykasten C."/>
            <person name="Boisrame A."/>
            <person name="Boyer J."/>
            <person name="Cattolico L."/>
            <person name="Confanioleri F."/>
            <person name="de Daruvar A."/>
            <person name="Despons L."/>
            <person name="Fabre E."/>
            <person name="Fairhead C."/>
            <person name="Ferry-Dumazet H."/>
            <person name="Groppi A."/>
            <person name="Hantraye F."/>
            <person name="Hennequin C."/>
            <person name="Jauniaux N."/>
            <person name="Joyet P."/>
            <person name="Kachouri R."/>
            <person name="Kerrest A."/>
            <person name="Koszul R."/>
            <person name="Lemaire M."/>
            <person name="Lesur I."/>
            <person name="Ma L."/>
            <person name="Muller H."/>
            <person name="Nicaud J.-M."/>
            <person name="Nikolski M."/>
            <person name="Oztas S."/>
            <person name="Ozier-Kalogeropoulos O."/>
            <person name="Pellenz S."/>
            <person name="Potier S."/>
            <person name="Richard G.-F."/>
            <person name="Straub M.-L."/>
            <person name="Suleau A."/>
            <person name="Swennen D."/>
            <person name="Tekaia F."/>
            <person name="Wesolowski-Louvel M."/>
            <person name="Westhof E."/>
            <person name="Wirth B."/>
            <person name="Zeniou-Meyer M."/>
            <person name="Zivanovic Y."/>
            <person name="Bolotin-Fukuhara M."/>
            <person name="Thierry A."/>
            <person name="Bouchier C."/>
            <person name="Caudron B."/>
            <person name="Scarpelli C."/>
            <person name="Gaillardin C."/>
            <person name="Weissenbach J."/>
            <person name="Wincker P."/>
            <person name="Souciet J.-L."/>
        </authorList>
    </citation>
    <scope>NUCLEOTIDE SEQUENCE [LARGE SCALE GENOMIC DNA]</scope>
    <source>
        <strain>ATCC 2001 / BCRC 20586 / JCM 3761 / NBRC 0622 / NRRL Y-65 / CBS 138</strain>
    </source>
</reference>
<reference key="3">
    <citation type="journal article" date="2024" name="Front. Microbiol.">
        <title>The gene YEF3 function encoding translation elongation factor eEF3 is partially conserved across fungi.</title>
        <authorList>
            <person name="Maldonado G."/>
            <person name="Garcia A."/>
            <person name="Herrero S."/>
            <person name="Castano I."/>
            <person name="Altmann M."/>
            <person name="Fischer R."/>
            <person name="Hernandez G."/>
        </authorList>
    </citation>
    <scope>FUNCTION</scope>
    <scope>DISRUPTION PHENOTYPE</scope>
</reference>
<proteinExistence type="inferred from homology"/>
<feature type="chain" id="PRO_0000093455" description="Elongation factor 3">
    <location>
        <begin position="1"/>
        <end position="1045"/>
    </location>
</feature>
<feature type="repeat" description="HEAT 1">
    <location>
        <begin position="5"/>
        <end position="42"/>
    </location>
</feature>
<feature type="repeat" description="HEAT 2">
    <location>
        <begin position="43"/>
        <end position="85"/>
    </location>
</feature>
<feature type="repeat" description="HEAT 3">
    <location>
        <begin position="86"/>
        <end position="123"/>
    </location>
</feature>
<feature type="repeat" description="HEAT 4">
    <location>
        <begin position="125"/>
        <end position="162"/>
    </location>
</feature>
<feature type="repeat" description="HEAT 5">
    <location>
        <begin position="166"/>
        <end position="203"/>
    </location>
</feature>
<feature type="repeat" description="HEAT 6">
    <location>
        <begin position="205"/>
        <end position="241"/>
    </location>
</feature>
<feature type="repeat" description="HEAT 7">
    <location>
        <begin position="242"/>
        <end position="279"/>
    </location>
</feature>
<feature type="domain" description="ABC transporter 1" evidence="2">
    <location>
        <begin position="426"/>
        <end position="641"/>
    </location>
</feature>
<feature type="domain" description="ABC transporter 2" evidence="2">
    <location>
        <begin position="667"/>
        <end position="993"/>
    </location>
</feature>
<feature type="region of interest" description="Disordered" evidence="3">
    <location>
        <begin position="974"/>
        <end position="1045"/>
    </location>
</feature>
<feature type="compositionally biased region" description="Basic residues" evidence="3">
    <location>
        <begin position="1007"/>
        <end position="1031"/>
    </location>
</feature>
<feature type="binding site" evidence="1">
    <location>
        <position position="42"/>
    </location>
    <ligand>
        <name>ADP</name>
        <dbReference type="ChEBI" id="CHEBI:456216"/>
    </ligand>
</feature>
<feature type="binding site" evidence="1">
    <location>
        <position position="44"/>
    </location>
    <ligand>
        <name>ADP</name>
        <dbReference type="ChEBI" id="CHEBI:456216"/>
    </ligand>
</feature>
<feature type="binding site" evidence="1">
    <location>
        <position position="83"/>
    </location>
    <ligand>
        <name>ADP</name>
        <dbReference type="ChEBI" id="CHEBI:456216"/>
    </ligand>
</feature>
<feature type="binding site" evidence="1">
    <location>
        <position position="392"/>
    </location>
    <ligand>
        <name>ADP</name>
        <dbReference type="ChEBI" id="CHEBI:456216"/>
    </ligand>
</feature>
<feature type="binding site" evidence="1">
    <location>
        <position position="396"/>
    </location>
    <ligand>
        <name>ADP</name>
        <dbReference type="ChEBI" id="CHEBI:456216"/>
    </ligand>
</feature>
<feature type="binding site" evidence="1">
    <location>
        <position position="397"/>
    </location>
    <ligand>
        <name>ADP</name>
        <dbReference type="ChEBI" id="CHEBI:456216"/>
    </ligand>
</feature>
<feature type="binding site" evidence="1">
    <location>
        <position position="703"/>
    </location>
    <ligand>
        <name>ADP</name>
        <dbReference type="ChEBI" id="CHEBI:456216"/>
    </ligand>
</feature>
<feature type="binding site" evidence="1">
    <location>
        <position position="922"/>
    </location>
    <ligand>
        <name>ADP</name>
        <dbReference type="ChEBI" id="CHEBI:456216"/>
    </ligand>
</feature>
<feature type="binding site" evidence="1">
    <location>
        <position position="925"/>
    </location>
    <ligand>
        <name>ADP</name>
        <dbReference type="ChEBI" id="CHEBI:456216"/>
    </ligand>
</feature>
<feature type="binding site" evidence="1">
    <location>
        <position position="951"/>
    </location>
    <ligand>
        <name>ADP</name>
        <dbReference type="ChEBI" id="CHEBI:456216"/>
    </ligand>
</feature>
<feature type="sequence conflict" description="In Ref. 1; BAA33959." evidence="5" ref="1">
    <original>A</original>
    <variation>T</variation>
    <location>
        <position position="854"/>
    </location>
</feature>
<feature type="sequence conflict" description="In Ref. 1; BAA33959." evidence="5" ref="1">
    <original>K</original>
    <variation>R</variation>
    <location>
        <position position="873"/>
    </location>
</feature>
<feature type="sequence conflict" description="In Ref. 1; BAA33959." evidence="5" ref="1">
    <original>E</original>
    <variation>K</variation>
    <location>
        <position position="887"/>
    </location>
</feature>
<feature type="sequence conflict" description="In Ref. 1; BAA33959." evidence="5" ref="1">
    <original>V</original>
    <variation>F</variation>
    <location>
        <position position="963"/>
    </location>
</feature>
<feature type="sequence conflict" description="In Ref. 1; BAA33959." evidence="5" ref="1">
    <original>M</original>
    <variation>I</variation>
    <location>
        <position position="971"/>
    </location>
</feature>
<feature type="sequence conflict" description="In Ref. 1; BAA33959." evidence="5" ref="1">
    <original>K</original>
    <variation>R</variation>
    <location>
        <position position="1021"/>
    </location>
</feature>
<gene>
    <name type="primary">TEF3</name>
    <name type="ordered locus">CAGL0B03487g</name>
</gene>
<comment type="function">
    <text evidence="1 4">Ribosome-dependent ATPase that functions in cytoplasmic translation elongation (PubMed:39247690). Required for the ATP-dependent release of deacylated tRNA from the ribosomal E-site during protein biosynthesis (By similarity). Stimulates the eEF1A-dependent binding of aminoacyl-tRNA to the ribosomal A-site, which has reduced affinity for tRNA as long as the E-site is occupied (By similarity). Assists translation termination by stimulating the release of nascent protein from the ribosome by release factors (By similarity).</text>
</comment>
<comment type="catalytic activity">
    <reaction evidence="1">
        <text>ATP + H2O = ADP + phosphate + H(+)</text>
        <dbReference type="Rhea" id="RHEA:13065"/>
        <dbReference type="ChEBI" id="CHEBI:15377"/>
        <dbReference type="ChEBI" id="CHEBI:15378"/>
        <dbReference type="ChEBI" id="CHEBI:30616"/>
        <dbReference type="ChEBI" id="CHEBI:43474"/>
        <dbReference type="ChEBI" id="CHEBI:456216"/>
    </reaction>
</comment>
<comment type="pathway">
    <text evidence="5">Protein biosynthesis; polypeptide chain elongation.</text>
</comment>
<comment type="subunit">
    <text evidence="1">Monomer.</text>
</comment>
<comment type="subcellular location">
    <subcellularLocation>
        <location evidence="1">Cytoplasm</location>
        <location evidence="1">Cytosol</location>
    </subcellularLocation>
</comment>
<comment type="disruption phenotype">
    <text evidence="4">Inviable.</text>
</comment>
<comment type="similarity">
    <text evidence="5">Belongs to the ABC transporter superfamily. ABCF family. EF3 subfamily.</text>
</comment>
<organism>
    <name type="scientific">Candida glabrata (strain ATCC 2001 / BCRC 20586 / JCM 3761 / NBRC 0622 / NRRL Y-65 / CBS 138)</name>
    <name type="common">Yeast</name>
    <name type="synonym">Nakaseomyces glabratus</name>
    <dbReference type="NCBI Taxonomy" id="284593"/>
    <lineage>
        <taxon>Eukaryota</taxon>
        <taxon>Fungi</taxon>
        <taxon>Dikarya</taxon>
        <taxon>Ascomycota</taxon>
        <taxon>Saccharomycotina</taxon>
        <taxon>Saccharomycetes</taxon>
        <taxon>Saccharomycetales</taxon>
        <taxon>Saccharomycetaceae</taxon>
        <taxon>Nakaseomyces</taxon>
    </lineage>
</organism>
<accession>O93796</accession>
<accession>Q6FXJ2</accession>
<dbReference type="EC" id="3.6.4.-" evidence="1"/>
<dbReference type="EMBL" id="AB012141">
    <property type="protein sequence ID" value="BAA33959.1"/>
    <property type="molecule type" value="Genomic_DNA"/>
</dbReference>
<dbReference type="EMBL" id="CR380948">
    <property type="protein sequence ID" value="CAG58023.1"/>
    <property type="molecule type" value="Genomic_DNA"/>
</dbReference>
<dbReference type="RefSeq" id="XP_445123.1">
    <property type="nucleotide sequence ID" value="XM_445123.1"/>
</dbReference>
<dbReference type="SMR" id="O93796"/>
<dbReference type="FunCoup" id="O93796">
    <property type="interactions" value="732"/>
</dbReference>
<dbReference type="STRING" id="284593.O93796"/>
<dbReference type="EnsemblFungi" id="CAGL0B03487g-T">
    <property type="protein sequence ID" value="CAGL0B03487g-T-p1"/>
    <property type="gene ID" value="CAGL0B03487g"/>
</dbReference>
<dbReference type="GeneID" id="2886522"/>
<dbReference type="KEGG" id="cgr:2886522"/>
<dbReference type="CGD" id="CAL0127772">
    <property type="gene designation" value="TEF3"/>
</dbReference>
<dbReference type="VEuPathDB" id="FungiDB:B1J91_B03487g"/>
<dbReference type="VEuPathDB" id="FungiDB:CAGL0B03487g"/>
<dbReference type="eggNOG" id="KOG0062">
    <property type="taxonomic scope" value="Eukaryota"/>
</dbReference>
<dbReference type="eggNOG" id="KOG1242">
    <property type="taxonomic scope" value="Eukaryota"/>
</dbReference>
<dbReference type="HOGENOM" id="CLU_002848_0_0_1"/>
<dbReference type="InParanoid" id="O93796"/>
<dbReference type="OMA" id="VLSEAMW"/>
<dbReference type="UniPathway" id="UPA00345"/>
<dbReference type="Proteomes" id="UP000002428">
    <property type="component" value="Chromosome B"/>
</dbReference>
<dbReference type="GO" id="GO:0010494">
    <property type="term" value="C:cytoplasmic stress granule"/>
    <property type="evidence" value="ECO:0007669"/>
    <property type="project" value="EnsemblFungi"/>
</dbReference>
<dbReference type="GO" id="GO:0022626">
    <property type="term" value="C:cytosolic ribosome"/>
    <property type="evidence" value="ECO:0007669"/>
    <property type="project" value="EnsemblFungi"/>
</dbReference>
<dbReference type="GO" id="GO:0062040">
    <property type="term" value="C:fungal biofilm matrix"/>
    <property type="evidence" value="ECO:0000314"/>
    <property type="project" value="CGD"/>
</dbReference>
<dbReference type="GO" id="GO:0005524">
    <property type="term" value="F:ATP binding"/>
    <property type="evidence" value="ECO:0007669"/>
    <property type="project" value="UniProtKB-KW"/>
</dbReference>
<dbReference type="GO" id="GO:0016887">
    <property type="term" value="F:ATP hydrolysis activity"/>
    <property type="evidence" value="ECO:0007669"/>
    <property type="project" value="EnsemblFungi"/>
</dbReference>
<dbReference type="GO" id="GO:0043022">
    <property type="term" value="F:ribosome binding"/>
    <property type="evidence" value="ECO:0007669"/>
    <property type="project" value="EnsemblFungi"/>
</dbReference>
<dbReference type="GO" id="GO:0003723">
    <property type="term" value="F:RNA binding"/>
    <property type="evidence" value="ECO:0007669"/>
    <property type="project" value="UniProtKB-KW"/>
</dbReference>
<dbReference type="GO" id="GO:0003746">
    <property type="term" value="F:translation elongation factor activity"/>
    <property type="evidence" value="ECO:0000316"/>
    <property type="project" value="UniProtKB"/>
</dbReference>
<dbReference type="GO" id="GO:0002182">
    <property type="term" value="P:cytoplasmic translational elongation"/>
    <property type="evidence" value="ECO:0000316"/>
    <property type="project" value="UniProtKB"/>
</dbReference>
<dbReference type="GO" id="GO:0002184">
    <property type="term" value="P:cytoplasmic translational termination"/>
    <property type="evidence" value="ECO:0007669"/>
    <property type="project" value="EnsemblFungi"/>
</dbReference>
<dbReference type="CDD" id="cd03221">
    <property type="entry name" value="ABCF_EF-3"/>
    <property type="match status" value="1"/>
</dbReference>
<dbReference type="CDD" id="cd18626">
    <property type="entry name" value="CD_eEF3"/>
    <property type="match status" value="1"/>
</dbReference>
<dbReference type="FunFam" id="1.20.1390.20:FF:000001">
    <property type="entry name" value="Elongation factor 3"/>
    <property type="match status" value="1"/>
</dbReference>
<dbReference type="FunFam" id="1.25.10.10:FF:000076">
    <property type="entry name" value="Elongation factor 3"/>
    <property type="match status" value="1"/>
</dbReference>
<dbReference type="FunFam" id="2.40.50.990:FF:000001">
    <property type="entry name" value="Elongation factor 3"/>
    <property type="match status" value="1"/>
</dbReference>
<dbReference type="FunFam" id="3.40.50.300:FF:000193">
    <property type="entry name" value="Probable Elongation factor 3"/>
    <property type="match status" value="1"/>
</dbReference>
<dbReference type="Gene3D" id="1.20.1390.20">
    <property type="match status" value="1"/>
</dbReference>
<dbReference type="Gene3D" id="2.40.50.990">
    <property type="match status" value="1"/>
</dbReference>
<dbReference type="Gene3D" id="1.25.10.10">
    <property type="entry name" value="Leucine-rich Repeat Variant"/>
    <property type="match status" value="1"/>
</dbReference>
<dbReference type="Gene3D" id="3.40.50.300">
    <property type="entry name" value="P-loop containing nucleotide triphosphate hydrolases"/>
    <property type="match status" value="2"/>
</dbReference>
<dbReference type="InterPro" id="IPR003593">
    <property type="entry name" value="AAA+_ATPase"/>
</dbReference>
<dbReference type="InterPro" id="IPR003439">
    <property type="entry name" value="ABC_transporter-like_ATP-bd"/>
</dbReference>
<dbReference type="InterPro" id="IPR017871">
    <property type="entry name" value="ABC_transporter-like_CS"/>
</dbReference>
<dbReference type="InterPro" id="IPR050611">
    <property type="entry name" value="ABCF_EF3_subfamily"/>
</dbReference>
<dbReference type="InterPro" id="IPR011989">
    <property type="entry name" value="ARM-like"/>
</dbReference>
<dbReference type="InterPro" id="IPR016024">
    <property type="entry name" value="ARM-type_fold"/>
</dbReference>
<dbReference type="InterPro" id="IPR015688">
    <property type="entry name" value="eEF3_ABC2_chromodomain-like"/>
</dbReference>
<dbReference type="InterPro" id="IPR047038">
    <property type="entry name" value="eEF3_chromodomain-like_sf"/>
</dbReference>
<dbReference type="InterPro" id="IPR040533">
    <property type="entry name" value="EF3_4HB"/>
</dbReference>
<dbReference type="InterPro" id="IPR047036">
    <property type="entry name" value="EF3_4HB_sf"/>
</dbReference>
<dbReference type="InterPro" id="IPR021133">
    <property type="entry name" value="HEAT_type_2"/>
</dbReference>
<dbReference type="InterPro" id="IPR027417">
    <property type="entry name" value="P-loop_NTPase"/>
</dbReference>
<dbReference type="PANTHER" id="PTHR19211">
    <property type="entry name" value="ATP-BINDING TRANSPORT PROTEIN-RELATED"/>
    <property type="match status" value="1"/>
</dbReference>
<dbReference type="PANTHER" id="PTHR19211:SF5">
    <property type="entry name" value="ELONGATION FACTOR 3A-RELATED"/>
    <property type="match status" value="1"/>
</dbReference>
<dbReference type="Pfam" id="PF17947">
    <property type="entry name" value="4HB"/>
    <property type="match status" value="1"/>
</dbReference>
<dbReference type="Pfam" id="PF00005">
    <property type="entry name" value="ABC_tran"/>
    <property type="match status" value="3"/>
</dbReference>
<dbReference type="Pfam" id="PF24984">
    <property type="entry name" value="HEAT_EF3_GNC1"/>
    <property type="match status" value="1"/>
</dbReference>
<dbReference type="Pfam" id="PF24987">
    <property type="entry name" value="HEAT_EF3_N"/>
    <property type="match status" value="1"/>
</dbReference>
<dbReference type="SMART" id="SM00382">
    <property type="entry name" value="AAA"/>
    <property type="match status" value="2"/>
</dbReference>
<dbReference type="SUPFAM" id="SSF48371">
    <property type="entry name" value="ARM repeat"/>
    <property type="match status" value="1"/>
</dbReference>
<dbReference type="SUPFAM" id="SSF52540">
    <property type="entry name" value="P-loop containing nucleoside triphosphate hydrolases"/>
    <property type="match status" value="2"/>
</dbReference>
<dbReference type="PROSITE" id="PS00211">
    <property type="entry name" value="ABC_TRANSPORTER_1"/>
    <property type="match status" value="2"/>
</dbReference>
<dbReference type="PROSITE" id="PS50893">
    <property type="entry name" value="ABC_TRANSPORTER_2"/>
    <property type="match status" value="2"/>
</dbReference>
<dbReference type="PROSITE" id="PS50077">
    <property type="entry name" value="HEAT_REPEAT"/>
    <property type="match status" value="2"/>
</dbReference>
<sequence>MTDSDQSLKVLEELFKNLSVATADNRVEAAQEVASFLNGNIIEHDIPEKFFEELAKAVKDKKTSANFLEAVAHIANEANLSPSVEPFVITLVPEICAKAGDKDKDVQAVASKTLVAISKAINPVAIKAYLPHLTKSLETTNKWQEKVSVLAAISALVDAAKEQVALRMPELIPVLSETMWDTKKEVKEAATATMTKATETVDNKDIERFIPQLISCIADPKQVPETVHLLGATTFVAEVTPATLSIMVPLLSRGLAERETSIKRKAAVIIDNMCKLVEDPQVVAPFLDKLLPGLKNNYATIADPEAREVTLRGLKTLRRVGNVTEDDVLPEISHAGDIETTLGVINELLKGENVAPRFKIVVEYIAAMAGDLIDERVIDQQAWFTHITPYMTIFMHERNAKDVLDEFRKRAVDNIPVGPNFDDEEDEGEDLCNCEFSLAYGAKILLNKTQLRLKRGRRYGLCGPNGAGKSTLMRAIANGQVDGFPTPEECMTVYVEHDIDGTHADTSVLDFVVSSEVGTKEAITAKLVEFGFTEEMINMPISSLSGGWKMKLALARAVLKNADILLLDEPTNHLDTVNVAWLVNYLNTCGITSVIVSHDSGFLDNVCQYIIHYEGLKLRKYKGNLSEFVKKCPTAQSYYELGASDLEFKFPEPGYLEGVKTKQKAIVKVSNMTFQYPGTSKPQISDISFQCSLSSRIAVIGPNGAGKSTLINVLTGELLPTSGEVYTHENCRIAYIKQHAFAHIESHLDKTPSEYIQWRFQTGEDRETMDRANRQINENDAEAMNKIFKIEGTPRRIAGIHARRKFKNTYEYECSFLLGENIGMKSERWVPMMSVDNAWIPRGELVESHSKMVAEVDMKEALASGQFRPLTRKEIEEHCAMLGLDAELVSHSRIRGLSGGQKVKLVLAACSWQRPHLIVLDEPTNYLDRDSLGALSKALKAFEGGVIIITHSAEFTKNLTEEVWAVKDGKMTPSGHNWVSGQGAGPRIEKKEDEEDKFDAMGNKIAGGKKKKKLSSAELRKKKKERMKKKKELGDAYVSSDDEDF</sequence>
<name>EF3_CANGA</name>
<evidence type="ECO:0000250" key="1">
    <source>
        <dbReference type="UniProtKB" id="P16521"/>
    </source>
</evidence>
<evidence type="ECO:0000255" key="2">
    <source>
        <dbReference type="PROSITE-ProRule" id="PRU00434"/>
    </source>
</evidence>
<evidence type="ECO:0000256" key="3">
    <source>
        <dbReference type="SAM" id="MobiDB-lite"/>
    </source>
</evidence>
<evidence type="ECO:0000269" key="4">
    <source>
    </source>
</evidence>
<evidence type="ECO:0000305" key="5"/>